<feature type="chain" id="PRO_0000155253" description="Thymidylate kinase">
    <location>
        <begin position="1"/>
        <end position="206"/>
    </location>
</feature>
<feature type="binding site" evidence="1">
    <location>
        <begin position="11"/>
        <end position="18"/>
    </location>
    <ligand>
        <name>ATP</name>
        <dbReference type="ChEBI" id="CHEBI:30616"/>
    </ligand>
</feature>
<protein>
    <recommendedName>
        <fullName evidence="1">Thymidylate kinase</fullName>
        <ecNumber evidence="1">2.7.4.9</ecNumber>
    </recommendedName>
    <alternativeName>
        <fullName evidence="1">dTMP kinase</fullName>
    </alternativeName>
</protein>
<gene>
    <name evidence="1" type="primary">tmk</name>
    <name type="ordered locus">BPSL1436</name>
</gene>
<reference key="1">
    <citation type="journal article" date="2004" name="Proc. Natl. Acad. Sci. U.S.A.">
        <title>Genomic plasticity of the causative agent of melioidosis, Burkholderia pseudomallei.</title>
        <authorList>
            <person name="Holden M.T.G."/>
            <person name="Titball R.W."/>
            <person name="Peacock S.J."/>
            <person name="Cerdeno-Tarraga A.-M."/>
            <person name="Atkins T."/>
            <person name="Crossman L.C."/>
            <person name="Pitt T."/>
            <person name="Churcher C."/>
            <person name="Mungall K.L."/>
            <person name="Bentley S.D."/>
            <person name="Sebaihia M."/>
            <person name="Thomson N.R."/>
            <person name="Bason N."/>
            <person name="Beacham I.R."/>
            <person name="Brooks K."/>
            <person name="Brown K.A."/>
            <person name="Brown N.F."/>
            <person name="Challis G.L."/>
            <person name="Cherevach I."/>
            <person name="Chillingworth T."/>
            <person name="Cronin A."/>
            <person name="Crossett B."/>
            <person name="Davis P."/>
            <person name="DeShazer D."/>
            <person name="Feltwell T."/>
            <person name="Fraser A."/>
            <person name="Hance Z."/>
            <person name="Hauser H."/>
            <person name="Holroyd S."/>
            <person name="Jagels K."/>
            <person name="Keith K.E."/>
            <person name="Maddison M."/>
            <person name="Moule S."/>
            <person name="Price C."/>
            <person name="Quail M.A."/>
            <person name="Rabbinowitsch E."/>
            <person name="Rutherford K."/>
            <person name="Sanders M."/>
            <person name="Simmonds M."/>
            <person name="Songsivilai S."/>
            <person name="Stevens K."/>
            <person name="Tumapa S."/>
            <person name="Vesaratchavest M."/>
            <person name="Whitehead S."/>
            <person name="Yeats C."/>
            <person name="Barrell B.G."/>
            <person name="Oyston P.C.F."/>
            <person name="Parkhill J."/>
        </authorList>
    </citation>
    <scope>NUCLEOTIDE SEQUENCE [LARGE SCALE GENOMIC DNA]</scope>
    <source>
        <strain>K96243</strain>
    </source>
</reference>
<sequence>MARGKFITFEGIDGAGKTTHLQWFCDRLQERLGPTGRHVVVTREPGGTQLGETLREILLNQPMDLETEALLMFAGRREHLALVIEPALARGDWVVSDRFTDATFAYQGGGRGLPRDKLEALERWVQGGFQPDLTVLFDVQPQVASARRGAVRMPDKFESESDAFFARTRAEYLRRAHEAPHRFAIVDSSESIPQIRRQLEGVLAAL</sequence>
<organism>
    <name type="scientific">Burkholderia pseudomallei (strain K96243)</name>
    <dbReference type="NCBI Taxonomy" id="272560"/>
    <lineage>
        <taxon>Bacteria</taxon>
        <taxon>Pseudomonadati</taxon>
        <taxon>Pseudomonadota</taxon>
        <taxon>Betaproteobacteria</taxon>
        <taxon>Burkholderiales</taxon>
        <taxon>Burkholderiaceae</taxon>
        <taxon>Burkholderia</taxon>
        <taxon>pseudomallei group</taxon>
    </lineage>
</organism>
<keyword id="KW-0067">ATP-binding</keyword>
<keyword id="KW-0418">Kinase</keyword>
<keyword id="KW-0545">Nucleotide biosynthesis</keyword>
<keyword id="KW-0547">Nucleotide-binding</keyword>
<keyword id="KW-1185">Reference proteome</keyword>
<keyword id="KW-0808">Transferase</keyword>
<dbReference type="EC" id="2.7.4.9" evidence="1"/>
<dbReference type="EMBL" id="BX571965">
    <property type="protein sequence ID" value="CAH35438.1"/>
    <property type="molecule type" value="Genomic_DNA"/>
</dbReference>
<dbReference type="RefSeq" id="WP_004527198.1">
    <property type="nucleotide sequence ID" value="NZ_CP009538.1"/>
</dbReference>
<dbReference type="RefSeq" id="YP_108058.1">
    <property type="nucleotide sequence ID" value="NC_006350.1"/>
</dbReference>
<dbReference type="SMR" id="Q63V08"/>
<dbReference type="STRING" id="272560.BPSL1436"/>
<dbReference type="GeneID" id="93060558"/>
<dbReference type="KEGG" id="bps:BPSL1436"/>
<dbReference type="PATRIC" id="fig|272560.51.peg.3458"/>
<dbReference type="eggNOG" id="COG0125">
    <property type="taxonomic scope" value="Bacteria"/>
</dbReference>
<dbReference type="Proteomes" id="UP000000605">
    <property type="component" value="Chromosome 1"/>
</dbReference>
<dbReference type="GO" id="GO:0005829">
    <property type="term" value="C:cytosol"/>
    <property type="evidence" value="ECO:0007669"/>
    <property type="project" value="TreeGrafter"/>
</dbReference>
<dbReference type="GO" id="GO:0005524">
    <property type="term" value="F:ATP binding"/>
    <property type="evidence" value="ECO:0007669"/>
    <property type="project" value="UniProtKB-UniRule"/>
</dbReference>
<dbReference type="GO" id="GO:0004798">
    <property type="term" value="F:dTMP kinase activity"/>
    <property type="evidence" value="ECO:0007669"/>
    <property type="project" value="UniProtKB-UniRule"/>
</dbReference>
<dbReference type="GO" id="GO:0006233">
    <property type="term" value="P:dTDP biosynthetic process"/>
    <property type="evidence" value="ECO:0007669"/>
    <property type="project" value="InterPro"/>
</dbReference>
<dbReference type="GO" id="GO:0006235">
    <property type="term" value="P:dTTP biosynthetic process"/>
    <property type="evidence" value="ECO:0007669"/>
    <property type="project" value="UniProtKB-UniRule"/>
</dbReference>
<dbReference type="GO" id="GO:0006227">
    <property type="term" value="P:dUDP biosynthetic process"/>
    <property type="evidence" value="ECO:0007669"/>
    <property type="project" value="TreeGrafter"/>
</dbReference>
<dbReference type="CDD" id="cd01672">
    <property type="entry name" value="TMPK"/>
    <property type="match status" value="1"/>
</dbReference>
<dbReference type="FunFam" id="3.40.50.300:FF:000225">
    <property type="entry name" value="Thymidylate kinase"/>
    <property type="match status" value="1"/>
</dbReference>
<dbReference type="Gene3D" id="3.40.50.300">
    <property type="entry name" value="P-loop containing nucleotide triphosphate hydrolases"/>
    <property type="match status" value="1"/>
</dbReference>
<dbReference type="HAMAP" id="MF_00165">
    <property type="entry name" value="Thymidylate_kinase"/>
    <property type="match status" value="1"/>
</dbReference>
<dbReference type="InterPro" id="IPR027417">
    <property type="entry name" value="P-loop_NTPase"/>
</dbReference>
<dbReference type="InterPro" id="IPR039430">
    <property type="entry name" value="Thymidylate_kin-like_dom"/>
</dbReference>
<dbReference type="InterPro" id="IPR018094">
    <property type="entry name" value="Thymidylate_kinase"/>
</dbReference>
<dbReference type="NCBIfam" id="TIGR00041">
    <property type="entry name" value="DTMP_kinase"/>
    <property type="match status" value="1"/>
</dbReference>
<dbReference type="PANTHER" id="PTHR10344">
    <property type="entry name" value="THYMIDYLATE KINASE"/>
    <property type="match status" value="1"/>
</dbReference>
<dbReference type="PANTHER" id="PTHR10344:SF4">
    <property type="entry name" value="UMP-CMP KINASE 2, MITOCHONDRIAL"/>
    <property type="match status" value="1"/>
</dbReference>
<dbReference type="Pfam" id="PF02223">
    <property type="entry name" value="Thymidylate_kin"/>
    <property type="match status" value="1"/>
</dbReference>
<dbReference type="SUPFAM" id="SSF52540">
    <property type="entry name" value="P-loop containing nucleoside triphosphate hydrolases"/>
    <property type="match status" value="1"/>
</dbReference>
<proteinExistence type="inferred from homology"/>
<evidence type="ECO:0000255" key="1">
    <source>
        <dbReference type="HAMAP-Rule" id="MF_00165"/>
    </source>
</evidence>
<accession>Q63V08</accession>
<name>KTHY_BURPS</name>
<comment type="function">
    <text evidence="1">Phosphorylation of dTMP to form dTDP in both de novo and salvage pathways of dTTP synthesis.</text>
</comment>
<comment type="catalytic activity">
    <reaction evidence="1">
        <text>dTMP + ATP = dTDP + ADP</text>
        <dbReference type="Rhea" id="RHEA:13517"/>
        <dbReference type="ChEBI" id="CHEBI:30616"/>
        <dbReference type="ChEBI" id="CHEBI:58369"/>
        <dbReference type="ChEBI" id="CHEBI:63528"/>
        <dbReference type="ChEBI" id="CHEBI:456216"/>
        <dbReference type="EC" id="2.7.4.9"/>
    </reaction>
</comment>
<comment type="similarity">
    <text evidence="1">Belongs to the thymidylate kinase family.</text>
</comment>